<gene>
    <name type="primary">IML3</name>
    <name type="synonym">MCM19</name>
    <name type="ordered locus">YBR107C</name>
    <name type="ORF">YBR0836</name>
</gene>
<evidence type="ECO:0000269" key="1">
    <source>
    </source>
</evidence>
<evidence type="ECO:0000269" key="2">
    <source>
    </source>
</evidence>
<evidence type="ECO:0000269" key="3">
    <source>
    </source>
</evidence>
<evidence type="ECO:0000269" key="4">
    <source>
    </source>
</evidence>
<evidence type="ECO:0000269" key="5">
    <source>
    </source>
</evidence>
<evidence type="ECO:0000269" key="6">
    <source>
    </source>
</evidence>
<evidence type="ECO:0000269" key="7">
    <source>
    </source>
</evidence>
<evidence type="ECO:0000303" key="8">
    <source>
    </source>
</evidence>
<evidence type="ECO:0000305" key="9"/>
<evidence type="ECO:0007829" key="10">
    <source>
        <dbReference type="PDB" id="4IT3"/>
    </source>
</evidence>
<evidence type="ECO:0007829" key="11">
    <source>
        <dbReference type="PDB" id="4JE3"/>
    </source>
</evidence>
<evidence type="ECO:0007829" key="12">
    <source>
        <dbReference type="PDB" id="6QLF"/>
    </source>
</evidence>
<name>CENPL_YEAST</name>
<feature type="chain" id="PRO_0000084182" description="Inner kinetochore subunit IML3">
    <location>
        <begin position="1"/>
        <end position="245"/>
    </location>
</feature>
<feature type="strand" evidence="11">
    <location>
        <begin position="3"/>
        <end position="12"/>
    </location>
</feature>
<feature type="helix" evidence="10">
    <location>
        <begin position="16"/>
        <end position="18"/>
    </location>
</feature>
<feature type="helix" evidence="11">
    <location>
        <begin position="21"/>
        <end position="26"/>
    </location>
</feature>
<feature type="strand" evidence="11">
    <location>
        <begin position="31"/>
        <end position="41"/>
    </location>
</feature>
<feature type="strand" evidence="11">
    <location>
        <begin position="46"/>
        <end position="60"/>
    </location>
</feature>
<feature type="helix" evidence="11">
    <location>
        <begin position="67"/>
        <end position="69"/>
    </location>
</feature>
<feature type="strand" evidence="11">
    <location>
        <begin position="72"/>
        <end position="77"/>
    </location>
</feature>
<feature type="strand" evidence="11">
    <location>
        <begin position="81"/>
        <end position="83"/>
    </location>
</feature>
<feature type="strand" evidence="11">
    <location>
        <begin position="85"/>
        <end position="91"/>
    </location>
</feature>
<feature type="helix" evidence="11">
    <location>
        <begin position="95"/>
        <end position="107"/>
    </location>
</feature>
<feature type="strand" evidence="11">
    <location>
        <begin position="111"/>
        <end position="113"/>
    </location>
</feature>
<feature type="helix" evidence="11">
    <location>
        <begin position="118"/>
        <end position="128"/>
    </location>
</feature>
<feature type="strand" evidence="11">
    <location>
        <begin position="130"/>
        <end position="132"/>
    </location>
</feature>
<feature type="strand" evidence="12">
    <location>
        <begin position="134"/>
        <end position="136"/>
    </location>
</feature>
<feature type="strand" evidence="11">
    <location>
        <begin position="138"/>
        <end position="140"/>
    </location>
</feature>
<feature type="strand" evidence="11">
    <location>
        <begin position="145"/>
        <end position="149"/>
    </location>
</feature>
<feature type="helix" evidence="11">
    <location>
        <begin position="154"/>
        <end position="156"/>
    </location>
</feature>
<feature type="strand" evidence="11">
    <location>
        <begin position="160"/>
        <end position="165"/>
    </location>
</feature>
<feature type="helix" evidence="11">
    <location>
        <begin position="167"/>
        <end position="175"/>
    </location>
</feature>
<feature type="helix" evidence="11">
    <location>
        <begin position="183"/>
        <end position="186"/>
    </location>
</feature>
<feature type="helix" evidence="11">
    <location>
        <begin position="188"/>
        <end position="196"/>
    </location>
</feature>
<feature type="turn" evidence="11">
    <location>
        <begin position="200"/>
        <end position="202"/>
    </location>
</feature>
<feature type="strand" evidence="11">
    <location>
        <begin position="205"/>
        <end position="210"/>
    </location>
</feature>
<feature type="turn" evidence="11">
    <location>
        <begin position="211"/>
        <end position="213"/>
    </location>
</feature>
<feature type="strand" evidence="11">
    <location>
        <begin position="214"/>
        <end position="219"/>
    </location>
</feature>
<feature type="strand" evidence="11">
    <location>
        <begin position="221"/>
        <end position="227"/>
    </location>
</feature>
<feature type="helix" evidence="11">
    <location>
        <begin position="230"/>
        <end position="239"/>
    </location>
</feature>
<comment type="function">
    <text evidence="1 5">Component of the kinetochore, a multiprotein complex that assembles on centromeric DNA and attaches chromosomes to spindle microtubules, mediating chromosome segregation and sister chromatid segregation during meiosis and mitosis. Component of the inner kinetochore constitutive centromere-associated network (CCAN), which serves as a structural platform for outer kinetochore assembly.</text>
</comment>
<comment type="subunit">
    <text evidence="2 3 6 7">Forms a heterodimer with IML3 (PubMed:12589047, PubMed:24075991). CHL4-IML3 is part of a larger constitutive centromere-associated network (CCAN) (also known as central kinetochore CTF19 complex in yeast), which is composed of at least AME1, CHL4, CNN1, CTF3, CTF19, IML3, MCM16, MCM21, MCM22, MHF1, MHF2, MIF2, NKP1, NKP2, OKP1 and WIP1 (PubMed:12408861, PubMed:22561346). Interacts with CHL4 and CTF19 (PubMed:12589047).</text>
</comment>
<comment type="subcellular location">
    <subcellularLocation>
        <location>Nucleus</location>
    </subcellularLocation>
    <subcellularLocation>
        <location>Chromosome</location>
        <location>Centromere</location>
        <location>Kinetochore</location>
    </subcellularLocation>
    <text>Associated with kinetochores.</text>
</comment>
<comment type="miscellaneous">
    <text evidence="4">Present with 125 molecules/cell in log phase SD medium.</text>
</comment>
<comment type="similarity">
    <text evidence="9">Belongs to the CENP-L/IML3 family.</text>
</comment>
<accession>P38265</accession>
<accession>D6VQA6</accession>
<organism>
    <name type="scientific">Saccharomyces cerevisiae (strain ATCC 204508 / S288c)</name>
    <name type="common">Baker's yeast</name>
    <dbReference type="NCBI Taxonomy" id="559292"/>
    <lineage>
        <taxon>Eukaryota</taxon>
        <taxon>Fungi</taxon>
        <taxon>Dikarya</taxon>
        <taxon>Ascomycota</taxon>
        <taxon>Saccharomycotina</taxon>
        <taxon>Saccharomycetes</taxon>
        <taxon>Saccharomycetales</taxon>
        <taxon>Saccharomycetaceae</taxon>
        <taxon>Saccharomyces</taxon>
    </lineage>
</organism>
<keyword id="KW-0002">3D-structure</keyword>
<keyword id="KW-0131">Cell cycle</keyword>
<keyword id="KW-0132">Cell division</keyword>
<keyword id="KW-0137">Centromere</keyword>
<keyword id="KW-0158">Chromosome</keyword>
<keyword id="KW-0995">Kinetochore</keyword>
<keyword id="KW-0469">Meiosis</keyword>
<keyword id="KW-0498">Mitosis</keyword>
<keyword id="KW-0539">Nucleus</keyword>
<keyword id="KW-1185">Reference proteome</keyword>
<protein>
    <recommendedName>
        <fullName evidence="9">Inner kinetochore subunit IML3</fullName>
    </recommendedName>
    <alternativeName>
        <fullName evidence="8">CENP-L homolog</fullName>
    </alternativeName>
    <alternativeName>
        <fullName evidence="9">Constitutive centromere-associated network protein IML3</fullName>
    </alternativeName>
    <alternativeName>
        <fullName>Increased minichromosome loss protein 3</fullName>
    </alternativeName>
    <alternativeName>
        <fullName>Minichromosome maintenance protein 19</fullName>
    </alternativeName>
</protein>
<sequence>MPYTWKFLGISKQLSLENGIAKLNQLLNLEVDLDIQTIRVPSDPDGGTAADEYIRYEMRLDISNLDEGTYSKFIFLGNSKMEVPMFLCYCGTDNRNEVVLQWLKAEYGVIMWPIKFEQKTMIKLADASIVHVTKENIEQITWFSSKLYFEPETQDKNLRQFSIEIPRESCEGLALGYGNTMHPYNDAIVPYIYNETGMAVERLPLTSVILAGHTKIMRESIVTSTRSLRNRVLAVVLQSIQFTSE</sequence>
<dbReference type="EMBL" id="X78993">
    <property type="protein sequence ID" value="CAA55610.1"/>
    <property type="molecule type" value="Genomic_DNA"/>
</dbReference>
<dbReference type="EMBL" id="Z35976">
    <property type="protein sequence ID" value="CAA85062.1"/>
    <property type="molecule type" value="Genomic_DNA"/>
</dbReference>
<dbReference type="EMBL" id="BK006936">
    <property type="protein sequence ID" value="DAA07226.1"/>
    <property type="molecule type" value="Genomic_DNA"/>
</dbReference>
<dbReference type="PIR" id="S48272">
    <property type="entry name" value="S48272"/>
</dbReference>
<dbReference type="RefSeq" id="NP_009665.3">
    <property type="nucleotide sequence ID" value="NM_001178455.3"/>
</dbReference>
<dbReference type="PDB" id="4IT3">
    <property type="method" value="X-ray"/>
    <property type="resolution" value="2.50 A"/>
    <property type="chains" value="A=1-245"/>
</dbReference>
<dbReference type="PDB" id="4JE3">
    <property type="method" value="X-ray"/>
    <property type="resolution" value="2.28 A"/>
    <property type="chains" value="A=1-242"/>
</dbReference>
<dbReference type="PDB" id="4KR1">
    <property type="method" value="X-ray"/>
    <property type="resolution" value="2.50 A"/>
    <property type="chains" value="A=1-245"/>
</dbReference>
<dbReference type="PDB" id="6NUW">
    <property type="method" value="EM"/>
    <property type="resolution" value="4.25 A"/>
    <property type="chains" value="B=1-245"/>
</dbReference>
<dbReference type="PDB" id="6QLD">
    <property type="method" value="EM"/>
    <property type="resolution" value="4.15 A"/>
    <property type="chains" value="L=2-242"/>
</dbReference>
<dbReference type="PDB" id="6QLE">
    <property type="method" value="EM"/>
    <property type="resolution" value="3.55 A"/>
    <property type="chains" value="L=1-245"/>
</dbReference>
<dbReference type="PDB" id="6QLF">
    <property type="method" value="EM"/>
    <property type="resolution" value="3.45 A"/>
    <property type="chains" value="L=1-245"/>
</dbReference>
<dbReference type="PDB" id="8OVW">
    <property type="method" value="EM"/>
    <property type="resolution" value="3.40 A"/>
    <property type="chains" value="L=1-245"/>
</dbReference>
<dbReference type="PDB" id="8OW0">
    <property type="method" value="EM"/>
    <property type="resolution" value="3.40 A"/>
    <property type="chains" value="L=1-245"/>
</dbReference>
<dbReference type="PDB" id="8OW1">
    <property type="method" value="EM"/>
    <property type="resolution" value="3.70 A"/>
    <property type="chains" value="L/LL=1-245"/>
</dbReference>
<dbReference type="PDBsum" id="4IT3"/>
<dbReference type="PDBsum" id="4JE3"/>
<dbReference type="PDBsum" id="4KR1"/>
<dbReference type="PDBsum" id="6NUW"/>
<dbReference type="PDBsum" id="6QLD"/>
<dbReference type="PDBsum" id="6QLE"/>
<dbReference type="PDBsum" id="6QLF"/>
<dbReference type="PDBsum" id="8OVW"/>
<dbReference type="PDBsum" id="8OW0"/>
<dbReference type="PDBsum" id="8OW1"/>
<dbReference type="EMDB" id="EMD-0523"/>
<dbReference type="EMDB" id="EMD-17224"/>
<dbReference type="EMDB" id="EMD-17226"/>
<dbReference type="EMDB" id="EMD-17227"/>
<dbReference type="EMDB" id="EMD-4579"/>
<dbReference type="EMDB" id="EMD-4580"/>
<dbReference type="EMDB" id="EMD-4581"/>
<dbReference type="SMR" id="P38265"/>
<dbReference type="BioGRID" id="32811">
    <property type="interactions" value="198"/>
</dbReference>
<dbReference type="ComplexPortal" id="CPX-1156">
    <property type="entry name" value="Central kinetochore CTF19 complex"/>
</dbReference>
<dbReference type="ComplexPortal" id="CPX-2533">
    <property type="entry name" value="Kinetochore CCAN complex"/>
</dbReference>
<dbReference type="DIP" id="DIP-5360N"/>
<dbReference type="FunCoup" id="P38265">
    <property type="interactions" value="73"/>
</dbReference>
<dbReference type="IntAct" id="P38265">
    <property type="interactions" value="30"/>
</dbReference>
<dbReference type="MINT" id="P38265"/>
<dbReference type="STRING" id="4932.YBR107C"/>
<dbReference type="PaxDb" id="4932-YBR107C"/>
<dbReference type="PeptideAtlas" id="P38265"/>
<dbReference type="EnsemblFungi" id="YBR107C_mRNA">
    <property type="protein sequence ID" value="YBR107C"/>
    <property type="gene ID" value="YBR107C"/>
</dbReference>
<dbReference type="GeneID" id="852404"/>
<dbReference type="KEGG" id="sce:YBR107C"/>
<dbReference type="AGR" id="SGD:S000000311"/>
<dbReference type="SGD" id="S000000311">
    <property type="gene designation" value="IML3"/>
</dbReference>
<dbReference type="VEuPathDB" id="FungiDB:YBR107C"/>
<dbReference type="eggNOG" id="ENOG502S57G">
    <property type="taxonomic scope" value="Eukaryota"/>
</dbReference>
<dbReference type="HOGENOM" id="CLU_1143196_0_0_1"/>
<dbReference type="InParanoid" id="P38265"/>
<dbReference type="OMA" id="YFEPETQ"/>
<dbReference type="OrthoDB" id="4035536at2759"/>
<dbReference type="BioCyc" id="YEAST:G3O-29069-MONOMER"/>
<dbReference type="BioGRID-ORCS" id="852404">
    <property type="hits" value="4 hits in 10 CRISPR screens"/>
</dbReference>
<dbReference type="EvolutionaryTrace" id="P38265"/>
<dbReference type="PRO" id="PR:P38265"/>
<dbReference type="Proteomes" id="UP000002311">
    <property type="component" value="Chromosome II"/>
</dbReference>
<dbReference type="RNAct" id="P38265">
    <property type="molecule type" value="protein"/>
</dbReference>
<dbReference type="GO" id="GO:0000776">
    <property type="term" value="C:kinetochore"/>
    <property type="evidence" value="ECO:0000353"/>
    <property type="project" value="ComplexPortal"/>
</dbReference>
<dbReference type="GO" id="GO:0005634">
    <property type="term" value="C:nucleus"/>
    <property type="evidence" value="ECO:0007669"/>
    <property type="project" value="UniProtKB-SubCell"/>
</dbReference>
<dbReference type="GO" id="GO:0000940">
    <property type="term" value="C:outer kinetochore"/>
    <property type="evidence" value="ECO:0000314"/>
    <property type="project" value="SGD"/>
</dbReference>
<dbReference type="GO" id="GO:0030437">
    <property type="term" value="P:ascospore formation"/>
    <property type="evidence" value="ECO:0000315"/>
    <property type="project" value="SGD"/>
</dbReference>
<dbReference type="GO" id="GO:0008608">
    <property type="term" value="P:attachment of spindle microtubules to kinetochore"/>
    <property type="evidence" value="ECO:0000303"/>
    <property type="project" value="ComplexPortal"/>
</dbReference>
<dbReference type="GO" id="GO:0051301">
    <property type="term" value="P:cell division"/>
    <property type="evidence" value="ECO:0007669"/>
    <property type="project" value="UniProtKB-KW"/>
</dbReference>
<dbReference type="GO" id="GO:0034089">
    <property type="term" value="P:establishment of meiotic sister chromatid cohesion"/>
    <property type="evidence" value="ECO:0000315"/>
    <property type="project" value="SGD"/>
</dbReference>
<dbReference type="GO" id="GO:0034087">
    <property type="term" value="P:establishment of mitotic sister chromatid cohesion"/>
    <property type="evidence" value="ECO:0000315"/>
    <property type="project" value="SGD"/>
</dbReference>
<dbReference type="GO" id="GO:0034090">
    <property type="term" value="P:maintenance of meiotic sister chromatid cohesion"/>
    <property type="evidence" value="ECO:0000315"/>
    <property type="project" value="SGD"/>
</dbReference>
<dbReference type="GO" id="GO:0045144">
    <property type="term" value="P:meiotic sister chromatid segregation"/>
    <property type="evidence" value="ECO:0000315"/>
    <property type="project" value="SGD"/>
</dbReference>
<dbReference type="GO" id="GO:0071459">
    <property type="term" value="P:protein localization to chromosome, centromeric region"/>
    <property type="evidence" value="ECO:0000315"/>
    <property type="project" value="SGD"/>
</dbReference>
<dbReference type="CDD" id="cd22875">
    <property type="entry name" value="IML3"/>
    <property type="match status" value="1"/>
</dbReference>
<proteinExistence type="evidence at protein level"/>
<reference key="1">
    <citation type="journal article" date="1994" name="Yeast">
        <title>Analysis of a 70 kb region on the right arm of yeast chromosome II.</title>
        <authorList>
            <person name="Mannhaupt G."/>
            <person name="Stucka R."/>
            <person name="Ehnle S."/>
            <person name="Vetter I."/>
            <person name="Feldmann H."/>
        </authorList>
    </citation>
    <scope>NUCLEOTIDE SEQUENCE [GENOMIC DNA]</scope>
    <source>
        <strain>ATCC 204508 / S288c</strain>
    </source>
</reference>
<reference key="2">
    <citation type="journal article" date="1994" name="EMBO J.">
        <title>Complete DNA sequence of yeast chromosome II.</title>
        <authorList>
            <person name="Feldmann H."/>
            <person name="Aigle M."/>
            <person name="Aljinovic G."/>
            <person name="Andre B."/>
            <person name="Baclet M.C."/>
            <person name="Barthe C."/>
            <person name="Baur A."/>
            <person name="Becam A.-M."/>
            <person name="Biteau N."/>
            <person name="Boles E."/>
            <person name="Brandt T."/>
            <person name="Brendel M."/>
            <person name="Brueckner M."/>
            <person name="Bussereau F."/>
            <person name="Christiansen C."/>
            <person name="Contreras R."/>
            <person name="Crouzet M."/>
            <person name="Cziepluch C."/>
            <person name="Demolis N."/>
            <person name="Delaveau T."/>
            <person name="Doignon F."/>
            <person name="Domdey H."/>
            <person name="Duesterhus S."/>
            <person name="Dubois E."/>
            <person name="Dujon B."/>
            <person name="El Bakkoury M."/>
            <person name="Entian K.-D."/>
            <person name="Feuermann M."/>
            <person name="Fiers W."/>
            <person name="Fobo G.M."/>
            <person name="Fritz C."/>
            <person name="Gassenhuber J."/>
            <person name="Glansdorff N."/>
            <person name="Goffeau A."/>
            <person name="Grivell L.A."/>
            <person name="de Haan M."/>
            <person name="Hein C."/>
            <person name="Herbert C.J."/>
            <person name="Hollenberg C.P."/>
            <person name="Holmstroem K."/>
            <person name="Jacq C."/>
            <person name="Jacquet M."/>
            <person name="Jauniaux J.-C."/>
            <person name="Jonniaux J.-L."/>
            <person name="Kallesoee T."/>
            <person name="Kiesau P."/>
            <person name="Kirchrath L."/>
            <person name="Koetter P."/>
            <person name="Korol S."/>
            <person name="Liebl S."/>
            <person name="Logghe M."/>
            <person name="Lohan A.J.E."/>
            <person name="Louis E.J."/>
            <person name="Li Z.Y."/>
            <person name="Maat M.J."/>
            <person name="Mallet L."/>
            <person name="Mannhaupt G."/>
            <person name="Messenguy F."/>
            <person name="Miosga T."/>
            <person name="Molemans F."/>
            <person name="Mueller S."/>
            <person name="Nasr F."/>
            <person name="Obermaier B."/>
            <person name="Perea J."/>
            <person name="Pierard A."/>
            <person name="Piravandi E."/>
            <person name="Pohl F.M."/>
            <person name="Pohl T.M."/>
            <person name="Potier S."/>
            <person name="Proft M."/>
            <person name="Purnelle B."/>
            <person name="Ramezani Rad M."/>
            <person name="Rieger M."/>
            <person name="Rose M."/>
            <person name="Schaaff-Gerstenschlaeger I."/>
            <person name="Scherens B."/>
            <person name="Schwarzlose C."/>
            <person name="Skala J."/>
            <person name="Slonimski P.P."/>
            <person name="Smits P.H.M."/>
            <person name="Souciet J.-L."/>
            <person name="Steensma H.Y."/>
            <person name="Stucka R."/>
            <person name="Urrestarazu L.A."/>
            <person name="van der Aart Q.J.M."/>
            <person name="Van Dyck L."/>
            <person name="Vassarotti A."/>
            <person name="Vetter I."/>
            <person name="Vierendeels F."/>
            <person name="Vissers S."/>
            <person name="Wagner G."/>
            <person name="de Wergifosse P."/>
            <person name="Wolfe K.H."/>
            <person name="Zagulski M."/>
            <person name="Zimmermann F.K."/>
            <person name="Mewes H.-W."/>
            <person name="Kleine K."/>
        </authorList>
    </citation>
    <scope>NUCLEOTIDE SEQUENCE [LARGE SCALE GENOMIC DNA]</scope>
    <source>
        <strain>ATCC 204508 / S288c</strain>
    </source>
</reference>
<reference key="3">
    <citation type="journal article" date="2014" name="G3 (Bethesda)">
        <title>The reference genome sequence of Saccharomyces cerevisiae: Then and now.</title>
        <authorList>
            <person name="Engel S.R."/>
            <person name="Dietrich F.S."/>
            <person name="Fisk D.G."/>
            <person name="Binkley G."/>
            <person name="Balakrishnan R."/>
            <person name="Costanzo M.C."/>
            <person name="Dwight S.S."/>
            <person name="Hitz B.C."/>
            <person name="Karra K."/>
            <person name="Nash R.S."/>
            <person name="Weng S."/>
            <person name="Wong E.D."/>
            <person name="Lloyd P."/>
            <person name="Skrzypek M.S."/>
            <person name="Miyasato S.R."/>
            <person name="Simison M."/>
            <person name="Cherry J.M."/>
        </authorList>
    </citation>
    <scope>GENOME REANNOTATION</scope>
    <source>
        <strain>ATCC 204508 / S288c</strain>
    </source>
</reference>
<reference key="4">
    <citation type="journal article" date="2001" name="Mol. Genet. Genomics">
        <title>The IML3/MCM19 gene of Saccharomyces cerevisiae is required for a kinetochore-related process during chromosome segregation.</title>
        <authorList>
            <person name="Ghosh S.K."/>
            <person name="Poddar A."/>
            <person name="Hajra S."/>
            <person name="Sanyal K."/>
            <person name="Sinha P."/>
        </authorList>
    </citation>
    <scope>FUNCTION</scope>
</reference>
<reference key="5">
    <citation type="journal article" date="2002" name="Cell">
        <title>Phospho-regulation of kinetochore-microtubule attachments by the Aurora kinase Ipl1p.</title>
        <authorList>
            <person name="Cheeseman I.M."/>
            <person name="Anderson S."/>
            <person name="Jwa M."/>
            <person name="Green E.M."/>
            <person name="Kang J.-S."/>
            <person name="Yates J.R. III"/>
            <person name="Chan C.S.M."/>
            <person name="Drubin D.G."/>
            <person name="Barnes G."/>
        </authorList>
    </citation>
    <scope>IDENTIFICATION BY MASS SPECTROMETRY</scope>
    <scope>COMPONENT OF CTF19 COMPLEX</scope>
</reference>
<reference key="6">
    <citation type="journal article" date="2003" name="Mol. Biol. Cell">
        <title>Chl4p and Iml3p are two new members of the budding yeast outer kinetochore.</title>
        <authorList>
            <person name="Pot I."/>
            <person name="Measday V."/>
            <person name="Snydsman B."/>
            <person name="Cagney G."/>
            <person name="Fields S."/>
            <person name="Davis T.N."/>
            <person name="Muller E.G.D."/>
            <person name="Hieter P."/>
        </authorList>
    </citation>
    <scope>INTERACTION WITH CHL4 AND CTF19</scope>
    <scope>SUBCELLULAR LOCATION</scope>
</reference>
<reference key="7">
    <citation type="journal article" date="2003" name="Nature">
        <title>Global analysis of protein localization in budding yeast.</title>
        <authorList>
            <person name="Huh W.-K."/>
            <person name="Falvo J.V."/>
            <person name="Gerke L.C."/>
            <person name="Carroll A.S."/>
            <person name="Howson R.W."/>
            <person name="Weissman J.S."/>
            <person name="O'Shea E.K."/>
        </authorList>
    </citation>
    <scope>SUBCELLULAR LOCATION [LARGE SCALE ANALYSIS]</scope>
</reference>
<reference key="8">
    <citation type="journal article" date="2003" name="Nature">
        <title>Global analysis of protein expression in yeast.</title>
        <authorList>
            <person name="Ghaemmaghami S."/>
            <person name="Huh W.-K."/>
            <person name="Bower K."/>
            <person name="Howson R.W."/>
            <person name="Belle A."/>
            <person name="Dephoure N."/>
            <person name="O'Shea E.K."/>
            <person name="Weissman J.S."/>
        </authorList>
    </citation>
    <scope>LEVEL OF PROTEIN EXPRESSION [LARGE SCALE ANALYSIS]</scope>
</reference>
<reference key="9">
    <citation type="journal article" date="2004" name="Curr. Genet.">
        <title>The Iml3 protein of the budding yeast is required for the prevention of precocious sister chromatid separation in meiosis I and for sister chromatid disjunction in meiosis II.</title>
        <authorList>
            <person name="Ghosh S.K."/>
            <person name="Sau S."/>
            <person name="Lahiri S."/>
            <person name="Lohia A."/>
            <person name="Sinha P."/>
        </authorList>
    </citation>
    <scope>FUNCTION</scope>
</reference>
<reference key="10">
    <citation type="journal article" date="2012" name="Nat. Cell Biol.">
        <title>CENP-T proteins are conserved centromere receptors of the Ndc80 complex.</title>
        <authorList>
            <person name="Schleiffer A."/>
            <person name="Maier M."/>
            <person name="Litos G."/>
            <person name="Lampert F."/>
            <person name="Hornung P."/>
            <person name="Mechtler K."/>
            <person name="Westermann S."/>
        </authorList>
    </citation>
    <scope>IDENTIFICATION IN CCAN</scope>
    <scope>SUBUNIT</scope>
</reference>
<reference key="11">
    <citation type="journal article" date="2013" name="Acta Crystallogr. D">
        <title>Structural insights into the role of the Chl4-Iml3 complex in kinetochore assembly.</title>
        <authorList>
            <person name="Guo Q."/>
            <person name="Tao Y."/>
            <person name="Liu H."/>
            <person name="Teng M."/>
            <person name="Li X."/>
        </authorList>
    </citation>
    <scope>X-RAY CRYSTALLOGRAPHY (2.50 ANGSTROMS)</scope>
</reference>
<reference key="12">
    <citation type="journal article" date="2013" name="Cell Rep.">
        <title>An Iml3-Chl4 heterodimer links the core centromere to factors required for accurate chromosome segregation.</title>
        <authorList>
            <person name="Hinshaw S.M."/>
            <person name="Harrison S.C."/>
        </authorList>
    </citation>
    <scope>X-RAY CRYSTALLOGRAPHY (2.28 ANGSTROMS) OF 1-242 IN COMPLEX WITH CHL4</scope>
</reference>